<keyword id="KW-0963">Cytoplasm</keyword>
<keyword id="KW-0648">Protein biosynthesis</keyword>
<protein>
    <recommendedName>
        <fullName evidence="1">Ribosome-recycling factor</fullName>
        <shortName evidence="1">RRF</shortName>
    </recommendedName>
    <alternativeName>
        <fullName evidence="1">Ribosome-releasing factor</fullName>
    </alternativeName>
</protein>
<accession>C0MBT1</accession>
<sequence length="185" mass="20554">MANAIIETAKERFTQSHHSLAREYASIRAGRANASLLDRIQVDYYGAPTPLNQLASITVPEARVLLISPFDKSSIKDIERALNASDLGITPANDGSVIRLVIPALTEETRKELAKEVKKVGETAKVSIRNIRRDAMDEAKKQEKAKEITEDELKALEKDIQKATDEAVKEIDRMTADKEKELLSV</sequence>
<reference key="1">
    <citation type="journal article" date="2009" name="PLoS Pathog.">
        <title>Genomic evidence for the evolution of Streptococcus equi: host restriction, increased virulence, and genetic exchange with human pathogens.</title>
        <authorList>
            <person name="Holden M.T.G."/>
            <person name="Heather Z."/>
            <person name="Paillot R."/>
            <person name="Steward K.F."/>
            <person name="Webb K."/>
            <person name="Ainslie F."/>
            <person name="Jourdan T."/>
            <person name="Bason N.C."/>
            <person name="Holroyd N.E."/>
            <person name="Mungall K."/>
            <person name="Quail M.A."/>
            <person name="Sanders M."/>
            <person name="Simmonds M."/>
            <person name="Willey D."/>
            <person name="Brooks K."/>
            <person name="Aanensen D.M."/>
            <person name="Spratt B.G."/>
            <person name="Jolley K.A."/>
            <person name="Maiden M.C.J."/>
            <person name="Kehoe M."/>
            <person name="Chanter N."/>
            <person name="Bentley S.D."/>
            <person name="Robinson C."/>
            <person name="Maskell D.J."/>
            <person name="Parkhill J."/>
            <person name="Waller A.S."/>
        </authorList>
    </citation>
    <scope>NUCLEOTIDE SEQUENCE [LARGE SCALE GENOMIC DNA]</scope>
    <source>
        <strain>4047</strain>
    </source>
</reference>
<organism>
    <name type="scientific">Streptococcus equi subsp. equi (strain 4047)</name>
    <dbReference type="NCBI Taxonomy" id="553482"/>
    <lineage>
        <taxon>Bacteria</taxon>
        <taxon>Bacillati</taxon>
        <taxon>Bacillota</taxon>
        <taxon>Bacilli</taxon>
        <taxon>Lactobacillales</taxon>
        <taxon>Streptococcaceae</taxon>
        <taxon>Streptococcus</taxon>
    </lineage>
</organism>
<feature type="chain" id="PRO_1000194953" description="Ribosome-recycling factor">
    <location>
        <begin position="1"/>
        <end position="185"/>
    </location>
</feature>
<comment type="function">
    <text evidence="1">Responsible for the release of ribosomes from messenger RNA at the termination of protein biosynthesis. May increase the efficiency of translation by recycling ribosomes from one round of translation to another.</text>
</comment>
<comment type="subcellular location">
    <subcellularLocation>
        <location evidence="1">Cytoplasm</location>
    </subcellularLocation>
</comment>
<comment type="similarity">
    <text evidence="1">Belongs to the RRF family.</text>
</comment>
<proteinExistence type="inferred from homology"/>
<name>RRF_STRE4</name>
<gene>
    <name evidence="1" type="primary">frr</name>
    <name type="ordered locus">SEQ_1642</name>
</gene>
<evidence type="ECO:0000255" key="1">
    <source>
        <dbReference type="HAMAP-Rule" id="MF_00040"/>
    </source>
</evidence>
<dbReference type="EMBL" id="FM204883">
    <property type="protein sequence ID" value="CAW94656.1"/>
    <property type="molecule type" value="Genomic_DNA"/>
</dbReference>
<dbReference type="RefSeq" id="WP_012516046.1">
    <property type="nucleotide sequence ID" value="NC_012471.1"/>
</dbReference>
<dbReference type="SMR" id="C0MBT1"/>
<dbReference type="KEGG" id="seu:SEQ_1642"/>
<dbReference type="HOGENOM" id="CLU_073981_2_0_9"/>
<dbReference type="OrthoDB" id="9804006at2"/>
<dbReference type="Proteomes" id="UP000001365">
    <property type="component" value="Chromosome"/>
</dbReference>
<dbReference type="GO" id="GO:0005737">
    <property type="term" value="C:cytoplasm"/>
    <property type="evidence" value="ECO:0007669"/>
    <property type="project" value="UniProtKB-SubCell"/>
</dbReference>
<dbReference type="GO" id="GO:0043023">
    <property type="term" value="F:ribosomal large subunit binding"/>
    <property type="evidence" value="ECO:0007669"/>
    <property type="project" value="TreeGrafter"/>
</dbReference>
<dbReference type="GO" id="GO:0006415">
    <property type="term" value="P:translational termination"/>
    <property type="evidence" value="ECO:0007669"/>
    <property type="project" value="UniProtKB-UniRule"/>
</dbReference>
<dbReference type="CDD" id="cd00520">
    <property type="entry name" value="RRF"/>
    <property type="match status" value="1"/>
</dbReference>
<dbReference type="FunFam" id="1.10.132.20:FF:000001">
    <property type="entry name" value="Ribosome-recycling factor"/>
    <property type="match status" value="1"/>
</dbReference>
<dbReference type="FunFam" id="3.30.1360.40:FF:000001">
    <property type="entry name" value="Ribosome-recycling factor"/>
    <property type="match status" value="1"/>
</dbReference>
<dbReference type="Gene3D" id="3.30.1360.40">
    <property type="match status" value="1"/>
</dbReference>
<dbReference type="Gene3D" id="1.10.132.20">
    <property type="entry name" value="Ribosome-recycling factor"/>
    <property type="match status" value="1"/>
</dbReference>
<dbReference type="HAMAP" id="MF_00040">
    <property type="entry name" value="RRF"/>
    <property type="match status" value="1"/>
</dbReference>
<dbReference type="InterPro" id="IPR002661">
    <property type="entry name" value="Ribosome_recyc_fac"/>
</dbReference>
<dbReference type="InterPro" id="IPR023584">
    <property type="entry name" value="Ribosome_recyc_fac_dom"/>
</dbReference>
<dbReference type="InterPro" id="IPR036191">
    <property type="entry name" value="RRF_sf"/>
</dbReference>
<dbReference type="NCBIfam" id="TIGR00496">
    <property type="entry name" value="frr"/>
    <property type="match status" value="1"/>
</dbReference>
<dbReference type="PANTHER" id="PTHR20982:SF3">
    <property type="entry name" value="MITOCHONDRIAL RIBOSOME RECYCLING FACTOR PSEUDO 1"/>
    <property type="match status" value="1"/>
</dbReference>
<dbReference type="PANTHER" id="PTHR20982">
    <property type="entry name" value="RIBOSOME RECYCLING FACTOR"/>
    <property type="match status" value="1"/>
</dbReference>
<dbReference type="Pfam" id="PF01765">
    <property type="entry name" value="RRF"/>
    <property type="match status" value="1"/>
</dbReference>
<dbReference type="SUPFAM" id="SSF55194">
    <property type="entry name" value="Ribosome recycling factor, RRF"/>
    <property type="match status" value="1"/>
</dbReference>